<accession>P0A409</accession>
<accession>P25897</accession>
<dbReference type="EC" id="1.97.1.12" evidence="2"/>
<dbReference type="EMBL" id="D10986">
    <property type="protein sequence ID" value="BAA01760.1"/>
    <property type="molecule type" value="Genomic_DNA"/>
</dbReference>
<dbReference type="PDB" id="6K33">
    <property type="method" value="EM"/>
    <property type="resolution" value="2.74 A"/>
    <property type="chains" value="aB/bB/cB=2-741"/>
</dbReference>
<dbReference type="PDBsum" id="6K33"/>
<dbReference type="EMDB" id="EMD-9908"/>
<dbReference type="SMR" id="P0A409"/>
<dbReference type="GO" id="GO:0009522">
    <property type="term" value="C:photosystem I"/>
    <property type="evidence" value="ECO:0007669"/>
    <property type="project" value="UniProtKB-KW"/>
</dbReference>
<dbReference type="GO" id="GO:0031676">
    <property type="term" value="C:plasma membrane-derived thylakoid membrane"/>
    <property type="evidence" value="ECO:0007669"/>
    <property type="project" value="UniProtKB-SubCell"/>
</dbReference>
<dbReference type="GO" id="GO:0051539">
    <property type="term" value="F:4 iron, 4 sulfur cluster binding"/>
    <property type="evidence" value="ECO:0007669"/>
    <property type="project" value="UniProtKB-KW"/>
</dbReference>
<dbReference type="GO" id="GO:0016168">
    <property type="term" value="F:chlorophyll binding"/>
    <property type="evidence" value="ECO:0007669"/>
    <property type="project" value="UniProtKB-KW"/>
</dbReference>
<dbReference type="GO" id="GO:0009055">
    <property type="term" value="F:electron transfer activity"/>
    <property type="evidence" value="ECO:0007669"/>
    <property type="project" value="UniProtKB-UniRule"/>
</dbReference>
<dbReference type="GO" id="GO:0000287">
    <property type="term" value="F:magnesium ion binding"/>
    <property type="evidence" value="ECO:0007669"/>
    <property type="project" value="UniProtKB-UniRule"/>
</dbReference>
<dbReference type="GO" id="GO:0016491">
    <property type="term" value="F:oxidoreductase activity"/>
    <property type="evidence" value="ECO:0007669"/>
    <property type="project" value="UniProtKB-KW"/>
</dbReference>
<dbReference type="GO" id="GO:0015979">
    <property type="term" value="P:photosynthesis"/>
    <property type="evidence" value="ECO:0007669"/>
    <property type="project" value="UniProtKB-UniRule"/>
</dbReference>
<dbReference type="FunFam" id="1.20.1130.10:FF:000001">
    <property type="entry name" value="Photosystem I P700 chlorophyll a apoprotein A2"/>
    <property type="match status" value="1"/>
</dbReference>
<dbReference type="Gene3D" id="1.20.1130.10">
    <property type="entry name" value="Photosystem I PsaA/PsaB"/>
    <property type="match status" value="1"/>
</dbReference>
<dbReference type="HAMAP" id="MF_00482">
    <property type="entry name" value="PSI_PsaB"/>
    <property type="match status" value="1"/>
</dbReference>
<dbReference type="InterPro" id="IPR001280">
    <property type="entry name" value="PSI_PsaA/B"/>
</dbReference>
<dbReference type="InterPro" id="IPR020586">
    <property type="entry name" value="PSI_PsaA/B_CS"/>
</dbReference>
<dbReference type="InterPro" id="IPR036408">
    <property type="entry name" value="PSI_PsaA/B_sf"/>
</dbReference>
<dbReference type="InterPro" id="IPR006244">
    <property type="entry name" value="PSI_PsaB"/>
</dbReference>
<dbReference type="NCBIfam" id="TIGR01336">
    <property type="entry name" value="psaB"/>
    <property type="match status" value="1"/>
</dbReference>
<dbReference type="PANTHER" id="PTHR30128">
    <property type="entry name" value="OUTER MEMBRANE PROTEIN, OMPA-RELATED"/>
    <property type="match status" value="1"/>
</dbReference>
<dbReference type="PANTHER" id="PTHR30128:SF19">
    <property type="entry name" value="PHOTOSYSTEM I P700 CHLOROPHYLL A APOPROTEIN A1-RELATED"/>
    <property type="match status" value="1"/>
</dbReference>
<dbReference type="Pfam" id="PF00223">
    <property type="entry name" value="PsaA_PsaB"/>
    <property type="match status" value="1"/>
</dbReference>
<dbReference type="PIRSF" id="PIRSF002905">
    <property type="entry name" value="PSI_A"/>
    <property type="match status" value="1"/>
</dbReference>
<dbReference type="PRINTS" id="PR00257">
    <property type="entry name" value="PHOTSYSPSAAB"/>
</dbReference>
<dbReference type="SUPFAM" id="SSF81558">
    <property type="entry name" value="Photosystem I subunits PsaA/PsaB"/>
    <property type="match status" value="1"/>
</dbReference>
<dbReference type="PROSITE" id="PS00419">
    <property type="entry name" value="PHOTOSYSTEM_I_PSAAB"/>
    <property type="match status" value="1"/>
</dbReference>
<protein>
    <recommendedName>
        <fullName evidence="2">Photosystem I P700 chlorophyll a apoprotein A2</fullName>
        <ecNumber evidence="2">1.97.1.12</ecNumber>
    </recommendedName>
    <alternativeName>
        <fullName evidence="2">PsaB</fullName>
    </alternativeName>
</protein>
<organism>
    <name type="scientific">Thermostichus vulcanus</name>
    <name type="common">Synechococcus vulcanus</name>
    <dbReference type="NCBI Taxonomy" id="32053"/>
    <lineage>
        <taxon>Bacteria</taxon>
        <taxon>Bacillati</taxon>
        <taxon>Cyanobacteriota</taxon>
        <taxon>Cyanophyceae</taxon>
        <taxon>Thermostichales</taxon>
        <taxon>Thermostichaceae</taxon>
        <taxon>Thermostichus</taxon>
    </lineage>
</organism>
<sequence>MATKFPKFSQDLAQDPTTRRIWYAIAMAHDFESHDGMTEENLYQKIFASHFGHLAIIFLWVSGSLFHVAWQGNFEQWVQDPVNTRPIAHAIWDPQFGKAAVDAFTQAGASNPVDIAYSGVYHWWYTIGMRTNGDLYQGAIFLLILASLALFAGWLHLQPKFRPSLSWFKNAESRLNHHLAGLFGVSSLAWAGHLIHVAIPESRGQHVGWDNFLSTMPHPAGLAPFFTGNWGVYAQNPDTASHVFGTAQGAGTAILTFLGGFHPQTESLWLTDMAHHHLAIAVLFIVAGHMYRTQFGIGHSIKEMMDAKDFFGTKVEGPFNMPHQGIYETYNNSLHFQLGWHLACLGVITSLVAQHMYSLPPYAFIAQDHTTMAALYTHHQYIAGFLMVGAFAHGAIFLVRDYDPAQNKGNVLDRVLQHKEAIISHLSWVSLFLGFHTLGLYVHNDVVVAFGTPEKQILIEPVFAQFIQAAHGKLLYGFDTLLSNPDSIASTAWPNYGNVWLPGWLDAINSGTNSLFLTIGPGDFLVHHAIALGLHTTTLILVKGALDARGSKLMPDKKDFGYAFPCDGPGRGGTCDISAWDAFYLAMFWMLNTIGWVTFYWHWKHLGVWEGNVAQFNESSTYLMGWLRDYLWLNSSQLINGYNPFGTNNLSVWAWMFLFGHLVWATGFMFLISWRGYWQELIETLVWAHERTPLANLVRWKDKPVALSIVQARLVGLAHFSVGYILTYAAFLIASTAAKFG</sequence>
<feature type="initiator methionine" description="Removed" evidence="1">
    <location>
        <position position="1"/>
    </location>
</feature>
<feature type="chain" id="PRO_0000088654" description="Photosystem I P700 chlorophyll a apoprotein A2">
    <location>
        <begin position="2"/>
        <end position="741"/>
    </location>
</feature>
<feature type="transmembrane region" description="Helical; Name=I" evidence="2">
    <location>
        <begin position="46"/>
        <end position="69"/>
    </location>
</feature>
<feature type="transmembrane region" description="Helical; Name=II" evidence="2">
    <location>
        <begin position="135"/>
        <end position="158"/>
    </location>
</feature>
<feature type="transmembrane region" description="Helical; Name=III" evidence="2">
    <location>
        <begin position="175"/>
        <end position="199"/>
    </location>
</feature>
<feature type="transmembrane region" description="Helical; Name=IV" evidence="2">
    <location>
        <begin position="273"/>
        <end position="291"/>
    </location>
</feature>
<feature type="transmembrane region" description="Helical; Name=V" evidence="2">
    <location>
        <begin position="334"/>
        <end position="357"/>
    </location>
</feature>
<feature type="transmembrane region" description="Helical; Name=VI" evidence="2">
    <location>
        <begin position="373"/>
        <end position="399"/>
    </location>
</feature>
<feature type="transmembrane region" description="Helical; Name=VII" evidence="2">
    <location>
        <begin position="421"/>
        <end position="443"/>
    </location>
</feature>
<feature type="transmembrane region" description="Helical; Name=VIII" evidence="2">
    <location>
        <begin position="524"/>
        <end position="542"/>
    </location>
</feature>
<feature type="transmembrane region" description="Helical; Name=IX" evidence="2">
    <location>
        <begin position="582"/>
        <end position="603"/>
    </location>
</feature>
<feature type="transmembrane region" description="Helical; Name=X" evidence="2">
    <location>
        <begin position="650"/>
        <end position="672"/>
    </location>
</feature>
<feature type="transmembrane region" description="Helical; Name=XI" evidence="2">
    <location>
        <begin position="714"/>
        <end position="734"/>
    </location>
</feature>
<feature type="binding site" evidence="2">
    <location>
        <position position="566"/>
    </location>
    <ligand>
        <name>[4Fe-4S] cluster</name>
        <dbReference type="ChEBI" id="CHEBI:49883"/>
        <note>ligand shared between dimeric partners</note>
    </ligand>
</feature>
<feature type="binding site" evidence="2">
    <location>
        <position position="575"/>
    </location>
    <ligand>
        <name>[4Fe-4S] cluster</name>
        <dbReference type="ChEBI" id="CHEBI:49883"/>
        <note>ligand shared between dimeric partners</note>
    </ligand>
</feature>
<feature type="binding site" description="axial binding residue" evidence="2">
    <location>
        <position position="661"/>
    </location>
    <ligand>
        <name>chlorophyll a</name>
        <dbReference type="ChEBI" id="CHEBI:58416"/>
        <label>B1</label>
    </ligand>
    <ligandPart>
        <name>Mg</name>
        <dbReference type="ChEBI" id="CHEBI:25107"/>
    </ligandPart>
</feature>
<feature type="binding site" description="axial binding residue" evidence="2">
    <location>
        <position position="669"/>
    </location>
    <ligand>
        <name>chlorophyll a</name>
        <dbReference type="ChEBI" id="CHEBI:58416"/>
        <label>B3</label>
    </ligand>
    <ligandPart>
        <name>Mg</name>
        <dbReference type="ChEBI" id="CHEBI:25107"/>
    </ligandPart>
</feature>
<feature type="binding site" evidence="2">
    <location>
        <position position="677"/>
    </location>
    <ligand>
        <name>chlorophyll a</name>
        <dbReference type="ChEBI" id="CHEBI:58416"/>
        <label>B3</label>
    </ligand>
</feature>
<feature type="binding site" evidence="2">
    <location>
        <position position="678"/>
    </location>
    <ligand>
        <name>phylloquinone</name>
        <dbReference type="ChEBI" id="CHEBI:18067"/>
        <label>B</label>
    </ligand>
</feature>
<proteinExistence type="evidence at protein level"/>
<gene>
    <name evidence="2" type="primary">psaB</name>
</gene>
<keyword id="KW-0002">3D-structure</keyword>
<keyword id="KW-0004">4Fe-4S</keyword>
<keyword id="KW-0148">Chlorophyll</keyword>
<keyword id="KW-0157">Chromophore</keyword>
<keyword id="KW-0249">Electron transport</keyword>
<keyword id="KW-0408">Iron</keyword>
<keyword id="KW-0411">Iron-sulfur</keyword>
<keyword id="KW-0460">Magnesium</keyword>
<keyword id="KW-0472">Membrane</keyword>
<keyword id="KW-0479">Metal-binding</keyword>
<keyword id="KW-0560">Oxidoreductase</keyword>
<keyword id="KW-0602">Photosynthesis</keyword>
<keyword id="KW-0603">Photosystem I</keyword>
<keyword id="KW-0793">Thylakoid</keyword>
<keyword id="KW-0812">Transmembrane</keyword>
<keyword id="KW-1133">Transmembrane helix</keyword>
<keyword id="KW-0813">Transport</keyword>
<name>PSAB_THEVL</name>
<reference key="1">
    <citation type="journal article" date="1992" name="Plant Mol. Biol.">
        <title>Nucleotide sequences of the psaA and psaB genes encoding the photosystem I core proteins from the thermophilic cyanobacterium Synechococcus vulcanus.</title>
        <authorList>
            <person name="Shimizu T."/>
            <person name="Hiyama T."/>
            <person name="Ikeuchi M."/>
            <person name="Inoue Y."/>
        </authorList>
    </citation>
    <scope>NUCLEOTIDE SEQUENCE [GENOMIC DNA]</scope>
</reference>
<comment type="function">
    <text evidence="2">PsaA and PsaB bind P700, the primary electron donor of photosystem I (PSI), as well as the electron acceptors A0, A1 and FX. PSI is a plastocyanin/cytochrome c6-ferredoxin oxidoreductase, converting photonic excitation into a charge separation, which transfers an electron from the donor P700 chlorophyll pair to the spectroscopically characterized acceptors A0, A1, FX, FA and FB in turn. Oxidized P700 is reduced on the lumenal side of the thylakoid membrane by plastocyanin or cytochrome c6.</text>
</comment>
<comment type="catalytic activity">
    <reaction evidence="2">
        <text>reduced [plastocyanin] + hnu + oxidized [2Fe-2S]-[ferredoxin] = oxidized [plastocyanin] + reduced [2Fe-2S]-[ferredoxin]</text>
        <dbReference type="Rhea" id="RHEA:30407"/>
        <dbReference type="Rhea" id="RHEA-COMP:10000"/>
        <dbReference type="Rhea" id="RHEA-COMP:10001"/>
        <dbReference type="Rhea" id="RHEA-COMP:10039"/>
        <dbReference type="Rhea" id="RHEA-COMP:10040"/>
        <dbReference type="ChEBI" id="CHEBI:29036"/>
        <dbReference type="ChEBI" id="CHEBI:30212"/>
        <dbReference type="ChEBI" id="CHEBI:33737"/>
        <dbReference type="ChEBI" id="CHEBI:33738"/>
        <dbReference type="ChEBI" id="CHEBI:49552"/>
        <dbReference type="EC" id="1.97.1.12"/>
    </reaction>
</comment>
<comment type="cofactor">
    <text evidence="2">PSI electron transfer chain: 5 chlorophyll a, 1 chlorophyll a', 2 phylloquinones and 3 4Fe-4S clusters. PSI core antenna: 90 chlorophyll a, 22 carotenoids, 3 phospholipids and 1 galactolipid. P700 is a chlorophyll a/chlorophyll a' dimer, A0 is one or more chlorophyll a, A1 is one or both phylloquinones and FX is a shared 4Fe-4S iron-sulfur center.</text>
</comment>
<comment type="subunit">
    <text evidence="2">The PsaA/B heterodimer binds the P700 chlorophyll special pair and subsequent electron acceptors. PSI consists of a core antenna complex that captures photons, and an electron transfer chain that converts photonic excitation into a charge separation. The cyanobacterial PSI reaction center is composed of one copy each of PsaA,B,C,D,E,F,I,J,K,L,M and X, and forms trimeric complexes.</text>
</comment>
<comment type="subcellular location">
    <subcellularLocation>
        <location evidence="2">Cellular thylakoid membrane</location>
        <topology evidence="2">Multi-pass membrane protein</topology>
    </subcellularLocation>
</comment>
<comment type="similarity">
    <text evidence="2">Belongs to the PsaA/PsaB family.</text>
</comment>
<evidence type="ECO:0000250" key="1"/>
<evidence type="ECO:0000255" key="2">
    <source>
        <dbReference type="HAMAP-Rule" id="MF_00482"/>
    </source>
</evidence>